<protein>
    <recommendedName>
        <fullName>Uncharacterized Nudix hydrolase YfcD</fullName>
        <ecNumber>3.6.-.-</ecNumber>
    </recommendedName>
</protein>
<dbReference type="EC" id="3.6.-.-"/>
<dbReference type="EMBL" id="AL513382">
    <property type="protein sequence ID" value="CAD07578.1"/>
    <property type="molecule type" value="Genomic_DNA"/>
</dbReference>
<dbReference type="EMBL" id="AE014613">
    <property type="protein sequence ID" value="AAO68224.1"/>
    <property type="molecule type" value="Genomic_DNA"/>
</dbReference>
<dbReference type="RefSeq" id="NP_456888.1">
    <property type="nucleotide sequence ID" value="NC_003198.1"/>
</dbReference>
<dbReference type="RefSeq" id="WP_000230215.1">
    <property type="nucleotide sequence ID" value="NZ_WSUR01000029.1"/>
</dbReference>
<dbReference type="SMR" id="P65560"/>
<dbReference type="STRING" id="220341.gene:17586475"/>
<dbReference type="KEGG" id="stt:t0518"/>
<dbReference type="KEGG" id="sty:STY2576"/>
<dbReference type="PATRIC" id="fig|220341.7.peg.2608"/>
<dbReference type="eggNOG" id="COG1443">
    <property type="taxonomic scope" value="Bacteria"/>
</dbReference>
<dbReference type="HOGENOM" id="CLU_060552_3_0_6"/>
<dbReference type="OMA" id="KDFYPGW"/>
<dbReference type="OrthoDB" id="517136at2"/>
<dbReference type="Proteomes" id="UP000000541">
    <property type="component" value="Chromosome"/>
</dbReference>
<dbReference type="Proteomes" id="UP000002670">
    <property type="component" value="Chromosome"/>
</dbReference>
<dbReference type="GO" id="GO:0016817">
    <property type="term" value="F:hydrolase activity, acting on acid anhydrides"/>
    <property type="evidence" value="ECO:0007669"/>
    <property type="project" value="InterPro"/>
</dbReference>
<dbReference type="GO" id="GO:0046872">
    <property type="term" value="F:metal ion binding"/>
    <property type="evidence" value="ECO:0007669"/>
    <property type="project" value="UniProtKB-KW"/>
</dbReference>
<dbReference type="CDD" id="cd04697">
    <property type="entry name" value="NUDIX_Hydrolase"/>
    <property type="match status" value="1"/>
</dbReference>
<dbReference type="FunFam" id="3.90.79.10:FF:000007">
    <property type="entry name" value="NUDIX hydrolase YfcD"/>
    <property type="match status" value="1"/>
</dbReference>
<dbReference type="Gene3D" id="3.90.79.10">
    <property type="entry name" value="Nucleoside Triphosphate Pyrophosphohydrolase"/>
    <property type="match status" value="1"/>
</dbReference>
<dbReference type="InterPro" id="IPR015797">
    <property type="entry name" value="NUDIX_hydrolase-like_dom_sf"/>
</dbReference>
<dbReference type="InterPro" id="IPR000086">
    <property type="entry name" value="NUDIX_hydrolase_dom"/>
</dbReference>
<dbReference type="InterPro" id="IPR024195">
    <property type="entry name" value="NUDIX_hydrolase_YfcD_pred"/>
</dbReference>
<dbReference type="NCBIfam" id="NF011922">
    <property type="entry name" value="PRK15393.1"/>
    <property type="match status" value="1"/>
</dbReference>
<dbReference type="PANTHER" id="PTHR10885">
    <property type="entry name" value="ISOPENTENYL-DIPHOSPHATE DELTA-ISOMERASE"/>
    <property type="match status" value="1"/>
</dbReference>
<dbReference type="PANTHER" id="PTHR10885:SF0">
    <property type="entry name" value="ISOPENTENYL-DIPHOSPHATE DELTA-ISOMERASE"/>
    <property type="match status" value="1"/>
</dbReference>
<dbReference type="Pfam" id="PF00293">
    <property type="entry name" value="NUDIX"/>
    <property type="match status" value="1"/>
</dbReference>
<dbReference type="PIRSF" id="PIRSF017340">
    <property type="entry name" value="Nudix_hydro"/>
    <property type="match status" value="1"/>
</dbReference>
<dbReference type="SUPFAM" id="SSF55811">
    <property type="entry name" value="Nudix"/>
    <property type="match status" value="1"/>
</dbReference>
<dbReference type="PROSITE" id="PS51462">
    <property type="entry name" value="NUDIX"/>
    <property type="match status" value="1"/>
</dbReference>
<comment type="cofactor">
    <cofactor evidence="1">
        <name>Mg(2+)</name>
        <dbReference type="ChEBI" id="CHEBI:18420"/>
    </cofactor>
</comment>
<comment type="similarity">
    <text evidence="3">Belongs to the Nudix hydrolase family.</text>
</comment>
<accession>P65560</accession>
<accession>Q8XFF7</accession>
<keyword id="KW-0378">Hydrolase</keyword>
<keyword id="KW-0460">Magnesium</keyword>
<keyword id="KW-0479">Metal-binding</keyword>
<organism>
    <name type="scientific">Salmonella typhi</name>
    <dbReference type="NCBI Taxonomy" id="90370"/>
    <lineage>
        <taxon>Bacteria</taxon>
        <taxon>Pseudomonadati</taxon>
        <taxon>Pseudomonadota</taxon>
        <taxon>Gammaproteobacteria</taxon>
        <taxon>Enterobacterales</taxon>
        <taxon>Enterobacteriaceae</taxon>
        <taxon>Salmonella</taxon>
    </lineage>
</organism>
<reference key="1">
    <citation type="journal article" date="2001" name="Nature">
        <title>Complete genome sequence of a multiple drug resistant Salmonella enterica serovar Typhi CT18.</title>
        <authorList>
            <person name="Parkhill J."/>
            <person name="Dougan G."/>
            <person name="James K.D."/>
            <person name="Thomson N.R."/>
            <person name="Pickard D."/>
            <person name="Wain J."/>
            <person name="Churcher C.M."/>
            <person name="Mungall K.L."/>
            <person name="Bentley S.D."/>
            <person name="Holden M.T.G."/>
            <person name="Sebaihia M."/>
            <person name="Baker S."/>
            <person name="Basham D."/>
            <person name="Brooks K."/>
            <person name="Chillingworth T."/>
            <person name="Connerton P."/>
            <person name="Cronin A."/>
            <person name="Davis P."/>
            <person name="Davies R.M."/>
            <person name="Dowd L."/>
            <person name="White N."/>
            <person name="Farrar J."/>
            <person name="Feltwell T."/>
            <person name="Hamlin N."/>
            <person name="Haque A."/>
            <person name="Hien T.T."/>
            <person name="Holroyd S."/>
            <person name="Jagels K."/>
            <person name="Krogh A."/>
            <person name="Larsen T.S."/>
            <person name="Leather S."/>
            <person name="Moule S."/>
            <person name="O'Gaora P."/>
            <person name="Parry C."/>
            <person name="Quail M.A."/>
            <person name="Rutherford K.M."/>
            <person name="Simmonds M."/>
            <person name="Skelton J."/>
            <person name="Stevens K."/>
            <person name="Whitehead S."/>
            <person name="Barrell B.G."/>
        </authorList>
    </citation>
    <scope>NUCLEOTIDE SEQUENCE [LARGE SCALE GENOMIC DNA]</scope>
    <source>
        <strain>CT18</strain>
    </source>
</reference>
<reference key="2">
    <citation type="journal article" date="2003" name="J. Bacteriol.">
        <title>Comparative genomics of Salmonella enterica serovar Typhi strains Ty2 and CT18.</title>
        <authorList>
            <person name="Deng W."/>
            <person name="Liou S.-R."/>
            <person name="Plunkett G. III"/>
            <person name="Mayhew G.F."/>
            <person name="Rose D.J."/>
            <person name="Burland V."/>
            <person name="Kodoyianni V."/>
            <person name="Schwartz D.C."/>
            <person name="Blattner F.R."/>
        </authorList>
    </citation>
    <scope>NUCLEOTIDE SEQUENCE [LARGE SCALE GENOMIC DNA]</scope>
    <source>
        <strain>ATCC 700931 / Ty2</strain>
    </source>
</reference>
<proteinExistence type="inferred from homology"/>
<name>YFCD_SALTI</name>
<feature type="chain" id="PRO_0000057081" description="Uncharacterized Nudix hydrolase YfcD">
    <location>
        <begin position="1"/>
        <end position="184"/>
    </location>
</feature>
<feature type="domain" description="Nudix hydrolase" evidence="2">
    <location>
        <begin position="36"/>
        <end position="164"/>
    </location>
</feature>
<feature type="short sequence motif" description="Nudix box">
    <location>
        <begin position="73"/>
        <end position="95"/>
    </location>
</feature>
<feature type="binding site" evidence="1">
    <location>
        <position position="89"/>
    </location>
    <ligand>
        <name>Mg(2+)</name>
        <dbReference type="ChEBI" id="CHEBI:18420"/>
    </ligand>
</feature>
<feature type="binding site" evidence="1">
    <location>
        <position position="93"/>
    </location>
    <ligand>
        <name>Mg(2+)</name>
        <dbReference type="ChEBI" id="CHEBI:18420"/>
    </ligand>
</feature>
<gene>
    <name type="primary">yfcD</name>
    <name type="ordered locus">STY2576</name>
    <name type="ordered locus">t0518</name>
</gene>
<sequence>MVEQRRLASTEWVDIVNEDNEVIAQSSREQMRAQRLRHRATYIVVHDGMGKILVQRRTETKDFLPGMLDATAGGVVQADEQLLESARREAEEELGIAGVPFAEHGLFYFEDQHCRVWGALFSCVSHGPFALQEDEVSEVCWLTPEEITARCDEFTPDSLKALALWMTRNAKNEAALQEKPEETE</sequence>
<evidence type="ECO:0000250" key="1"/>
<evidence type="ECO:0000255" key="2">
    <source>
        <dbReference type="PROSITE-ProRule" id="PRU00794"/>
    </source>
</evidence>
<evidence type="ECO:0000305" key="3"/>